<evidence type="ECO:0000269" key="1">
    <source>
    </source>
</evidence>
<evidence type="ECO:0000269" key="2">
    <source>
    </source>
</evidence>
<evidence type="ECO:0000269" key="3">
    <source>
    </source>
</evidence>
<evidence type="ECO:0000269" key="4">
    <source>
    </source>
</evidence>
<evidence type="ECO:0000269" key="5">
    <source>
    </source>
</evidence>
<evidence type="ECO:0000269" key="6">
    <source>
    </source>
</evidence>
<evidence type="ECO:0000269" key="7">
    <source>
    </source>
</evidence>
<evidence type="ECO:0000303" key="8">
    <source>
    </source>
</evidence>
<evidence type="ECO:0000305" key="9"/>
<evidence type="ECO:0007744" key="10">
    <source>
        <dbReference type="PDB" id="2POH"/>
    </source>
</evidence>
<evidence type="ECO:0007744" key="11">
    <source>
        <dbReference type="PDB" id="4ZKP"/>
    </source>
</evidence>
<evidence type="ECO:0007744" key="12">
    <source>
        <dbReference type="PDB" id="4ZKU"/>
    </source>
</evidence>
<evidence type="ECO:0007744" key="13">
    <source>
        <dbReference type="PDB" id="4ZXQ"/>
    </source>
</evidence>
<evidence type="ECO:0007744" key="14">
    <source>
        <dbReference type="PDB" id="8EAP"/>
    </source>
</evidence>
<evidence type="ECO:0007829" key="15">
    <source>
        <dbReference type="PDB" id="2POH"/>
    </source>
</evidence>
<evidence type="ECO:0007829" key="16">
    <source>
        <dbReference type="PDB" id="3C9I"/>
    </source>
</evidence>
<evidence type="ECO:0007829" key="17">
    <source>
        <dbReference type="PDB" id="4LIN"/>
    </source>
</evidence>
<feature type="chain" id="PRO_0000077767" description="Tail needle protein gp26">
    <location>
        <begin position="1"/>
        <end position="233"/>
    </location>
</feature>
<feature type="repeat" description="Trimerization heptad repeat 1" evidence="3">
    <location>
        <begin position="61"/>
        <end position="67"/>
    </location>
</feature>
<feature type="repeat" description="Trimerization heptad repeat 2" evidence="3">
    <location>
        <begin position="70"/>
        <end position="76"/>
    </location>
</feature>
<feature type="repeat" description="Trimerization heptad repeat 3" evidence="3">
    <location>
        <begin position="77"/>
        <end position="83"/>
    </location>
</feature>
<feature type="repeat" description="Trimerization heptad repeat 4" evidence="3">
    <location>
        <begin position="84"/>
        <end position="90"/>
    </location>
</feature>
<feature type="repeat" description="Trimerization heptad repeat 5" evidence="3">
    <location>
        <begin position="91"/>
        <end position="97"/>
    </location>
</feature>
<feature type="repeat" description="Trimerization heptad repeat 6" evidence="3">
    <location>
        <begin position="98"/>
        <end position="104"/>
    </location>
</feature>
<feature type="repeat" description="Trimerization heptad repeat 7" evidence="3">
    <location>
        <begin position="105"/>
        <end position="111"/>
    </location>
</feature>
<feature type="repeat" description="Trimerization heptad repeat 8" evidence="3">
    <location>
        <begin position="112"/>
        <end position="118"/>
    </location>
</feature>
<feature type="repeat" description="Trimerization heptad repeat 9" evidence="3">
    <location>
        <begin position="119"/>
        <end position="125"/>
    </location>
</feature>
<feature type="repeat" description="Trimerization heptad repeat 10" evidence="3">
    <location>
        <begin position="126"/>
        <end position="132"/>
    </location>
</feature>
<feature type="repeat" description="Trimerization heptad repeat 11" evidence="3">
    <location>
        <begin position="133"/>
        <end position="139"/>
    </location>
</feature>
<feature type="region of interest" description="Interaction with tail hub protein gp10" evidence="8">
    <location>
        <begin position="2"/>
        <end position="60"/>
    </location>
</feature>
<feature type="region of interest" description="Inverted coiled coil" evidence="3">
    <location>
        <begin position="175"/>
        <end position="233"/>
    </location>
</feature>
<feature type="coiled-coil region" evidence="9">
    <location>
        <begin position="61"/>
        <end position="139"/>
    </location>
</feature>
<feature type="short sequence motif" description="Basic cluster">
    <location>
        <begin position="216"/>
        <end position="220"/>
    </location>
</feature>
<feature type="sequence conflict" description="In Ref. 3; AAM81393/DAA00991." evidence="9" ref="3">
    <original>L</original>
    <variation>V</variation>
    <location>
        <position position="169"/>
    </location>
</feature>
<feature type="helix" evidence="16">
    <location>
        <begin position="4"/>
        <end position="7"/>
    </location>
</feature>
<feature type="strand" evidence="16">
    <location>
        <begin position="19"/>
        <end position="22"/>
    </location>
</feature>
<feature type="turn" evidence="16">
    <location>
        <begin position="24"/>
        <end position="26"/>
    </location>
</feature>
<feature type="helix" evidence="16">
    <location>
        <begin position="29"/>
        <end position="139"/>
    </location>
</feature>
<feature type="strand" evidence="16">
    <location>
        <begin position="142"/>
        <end position="144"/>
    </location>
</feature>
<feature type="strand" evidence="16">
    <location>
        <begin position="155"/>
        <end position="159"/>
    </location>
</feature>
<feature type="strand" evidence="16">
    <location>
        <begin position="161"/>
        <end position="163"/>
    </location>
</feature>
<feature type="strand" evidence="16">
    <location>
        <begin position="166"/>
        <end position="169"/>
    </location>
</feature>
<feature type="strand" evidence="17">
    <location>
        <begin position="179"/>
        <end position="181"/>
    </location>
</feature>
<feature type="helix" evidence="16">
    <location>
        <begin position="202"/>
        <end position="229"/>
    </location>
</feature>
<feature type="strand" evidence="15">
    <location>
        <begin position="230"/>
        <end position="232"/>
    </location>
</feature>
<organismHost>
    <name type="scientific">Salmonella typhimurium</name>
    <dbReference type="NCBI Taxonomy" id="90371"/>
</organismHost>
<keyword id="KW-0002">3D-structure</keyword>
<keyword id="KW-0175">Coiled coil</keyword>
<keyword id="KW-0426">Late protein</keyword>
<keyword id="KW-1172">Pore-mediated penetration of viral genome into host cell</keyword>
<keyword id="KW-1185">Reference proteome</keyword>
<keyword id="KW-0677">Repeat</keyword>
<keyword id="KW-1171">Viral genome ejection through host cell envelope</keyword>
<keyword id="KW-1162">Viral penetration into host cytoplasm</keyword>
<keyword id="KW-1244">Viral short tail ejection system</keyword>
<keyword id="KW-1227">Viral tail protein</keyword>
<keyword id="KW-0946">Virion</keyword>
<keyword id="KW-1160">Virus entry into host cell</keyword>
<dbReference type="EMBL" id="L14810">
    <property type="protein sequence ID" value="AAA32271.1"/>
    <property type="molecule type" value="Genomic_DNA"/>
</dbReference>
<dbReference type="EMBL" id="AF217253">
    <property type="protein sequence ID" value="AAF75051.1"/>
    <property type="molecule type" value="Genomic_DNA"/>
</dbReference>
<dbReference type="EMBL" id="AF527608">
    <property type="protein sequence ID" value="AAM81393.1"/>
    <property type="molecule type" value="Genomic_DNA"/>
</dbReference>
<dbReference type="EMBL" id="BK000583">
    <property type="protein sequence ID" value="DAA00991.1"/>
    <property type="molecule type" value="Genomic_DNA"/>
</dbReference>
<dbReference type="PIR" id="S34956">
    <property type="entry name" value="S34956"/>
</dbReference>
<dbReference type="RefSeq" id="YP_063715.1">
    <property type="nucleotide sequence ID" value="NC_002371.2"/>
</dbReference>
<dbReference type="PDB" id="2POH">
    <property type="method" value="X-ray"/>
    <property type="resolution" value="2.10 A"/>
    <property type="chains" value="A/B/C/D/E/F=1-233"/>
</dbReference>
<dbReference type="PDB" id="3C9I">
    <property type="method" value="X-ray"/>
    <property type="resolution" value="1.95 A"/>
    <property type="chains" value="A/B/C/D/E/F=1-233"/>
</dbReference>
<dbReference type="PDB" id="4LIN">
    <property type="method" value="X-ray"/>
    <property type="resolution" value="2.70 A"/>
    <property type="chains" value="A/B/C/D/E/F/G/H/I/J/K/L=1-233"/>
</dbReference>
<dbReference type="PDB" id="4ZKP">
    <property type="method" value="X-ray"/>
    <property type="resolution" value="2.10 A"/>
    <property type="chains" value="A/B=1-233"/>
</dbReference>
<dbReference type="PDB" id="4ZKU">
    <property type="method" value="X-ray"/>
    <property type="resolution" value="2.50 A"/>
    <property type="chains" value="A/B=1-233"/>
</dbReference>
<dbReference type="PDB" id="4ZXQ">
    <property type="method" value="X-ray"/>
    <property type="resolution" value="2.75 A"/>
    <property type="chains" value="A/B/C/D/E/F=1-140"/>
</dbReference>
<dbReference type="PDB" id="8EAP">
    <property type="method" value="EM"/>
    <property type="resolution" value="3.30 A"/>
    <property type="chains" value="A/B/C=3-64"/>
</dbReference>
<dbReference type="PDBsum" id="2POH"/>
<dbReference type="PDBsum" id="3C9I"/>
<dbReference type="PDBsum" id="4LIN"/>
<dbReference type="PDBsum" id="4ZKP"/>
<dbReference type="PDBsum" id="4ZKU"/>
<dbReference type="PDBsum" id="4ZXQ"/>
<dbReference type="PDBsum" id="8EAP"/>
<dbReference type="SMR" id="P35837"/>
<dbReference type="DIP" id="DIP-60502N"/>
<dbReference type="TCDB" id="1.K.4.1.1">
    <property type="family name" value="the phage p22 injectisome (p22 injectisome) family"/>
</dbReference>
<dbReference type="GeneID" id="2944243"/>
<dbReference type="KEGG" id="vg:2944243"/>
<dbReference type="OrthoDB" id="10101at10239"/>
<dbReference type="EvolutionaryTrace" id="P35837"/>
<dbReference type="Proteomes" id="UP000001795">
    <property type="component" value="Segment"/>
</dbReference>
<dbReference type="Proteomes" id="UP000001796">
    <property type="component" value="Segment"/>
</dbReference>
<dbReference type="Proteomes" id="UP000007960">
    <property type="component" value="Segment"/>
</dbReference>
<dbReference type="GO" id="GO:0098015">
    <property type="term" value="C:virus tail"/>
    <property type="evidence" value="ECO:0007669"/>
    <property type="project" value="UniProtKB-KW"/>
</dbReference>
<dbReference type="GO" id="GO:0099002">
    <property type="term" value="P:symbiont genome ejection through host cell envelope, short tail mechanism"/>
    <property type="evidence" value="ECO:0007669"/>
    <property type="project" value="UniProtKB-KW"/>
</dbReference>
<dbReference type="GO" id="GO:0044694">
    <property type="term" value="P:symbiont genome entry into host cell via pore formation in plasma membrane"/>
    <property type="evidence" value="ECO:0007669"/>
    <property type="project" value="UniProtKB-KW"/>
</dbReference>
<dbReference type="Gene3D" id="1.20.5.340">
    <property type="match status" value="1"/>
</dbReference>
<dbReference type="Gene3D" id="6.10.140.940">
    <property type="match status" value="1"/>
</dbReference>
<dbReference type="SUPFAM" id="SSF57997">
    <property type="entry name" value="Tropomyosin"/>
    <property type="match status" value="1"/>
</dbReference>
<accession>P35837</accession>
<accession>I7KJL6</accession>
<accession>Q8LTG5</accession>
<gene>
    <name type="primary">26</name>
</gene>
<protein>
    <recommendedName>
        <fullName>Tail needle protein gp26</fullName>
    </recommendedName>
    <alternativeName>
        <fullName>Head completion protein</fullName>
    </alternativeName>
    <alternativeName>
        <fullName>Packaged DNA stabilization protein</fullName>
    </alternativeName>
    <alternativeName>
        <fullName>Tail accessory factor gp26</fullName>
    </alternativeName>
</protein>
<sequence length="233" mass="24734">MADPSLNNPVVIQATRLDASILPRNVFSKSYLLYVIAQGTDVGAIAGKANEAGQGAYDAQVKNDEQDVELADHEARIKQLRIDVDDHESRITANTKAITALNVRVTTAEGEIASLQTNVSALDGRVTTAENNISALQADYVSKTATTSQSLASPLNVTTSYSVGGKKVLGARQTGWTAATGTANKGVFDADLTFAVSDTYTQSEIQAIANALITERRRTKALEDALRAHGLID</sequence>
<name>NEEDL_BPP22</name>
<organism>
    <name type="scientific">Salmonella phage P22</name>
    <name type="common">Bacteriophage P22</name>
    <dbReference type="NCBI Taxonomy" id="10754"/>
    <lineage>
        <taxon>Viruses</taxon>
        <taxon>Duplodnaviria</taxon>
        <taxon>Heunggongvirae</taxon>
        <taxon>Uroviricota</taxon>
        <taxon>Caudoviricetes</taxon>
        <taxon>Lederbergvirus</taxon>
    </lineage>
</organism>
<proteinExistence type="evidence at protein level"/>
<reference key="1">
    <citation type="journal article" date="1993" name="Nucleic Acids Res.">
        <title>Nucleotide sequence of Salmonella bacteriophage P22 head completion genes 10 and 26.</title>
        <authorList>
            <person name="Casjens S.R."/>
            <person name="Sampson L."/>
        </authorList>
    </citation>
    <scope>NUCLEOTIDE SEQUENCE [GENOMIC DNA]</scope>
</reference>
<reference key="2">
    <citation type="journal article" date="2000" name="J. Bacteriol.">
        <title>Sequence of the genome of Salmonella bacteriophage P22.</title>
        <authorList>
            <person name="Vander Byl C.S."/>
            <person name="Kropinski A.M.B."/>
        </authorList>
    </citation>
    <scope>NUCLEOTIDE SEQUENCE [LARGE SCALE GENOMIC DNA]</scope>
</reference>
<reference key="3">
    <citation type="journal article" date="2003" name="J. Bacteriol.">
        <title>Corrected sequence of the bacteriophage P22 genome.</title>
        <authorList>
            <person name="Pedulla M.L."/>
            <person name="Ford M.E."/>
            <person name="Karthikeyan T."/>
            <person name="Houtz J.M."/>
            <person name="Hendrix R.W."/>
            <person name="Hatfull G.F."/>
            <person name="Poteete A.R."/>
            <person name="Gilcrease E.B."/>
            <person name="Winn-Stapley D.A."/>
            <person name="Casjens S.R."/>
        </authorList>
    </citation>
    <scope>NUCLEOTIDE SEQUENCE [LARGE SCALE GENOMIC DNA]</scope>
</reference>
<reference key="4">
    <citation type="journal article" date="2009" name="J. Mol. Biol.">
        <title>An evolutionarily conserved family of virion tail needles related to bacteriophage P22 gp26: correlation between structural stability and length of the alpha-helical trimeric coiled coil.</title>
        <authorList>
            <person name="Bhardwaj A."/>
            <person name="Walker-Kopp N."/>
            <person name="Casjens S.R."/>
            <person name="Cingolani G."/>
        </authorList>
    </citation>
    <scope>DOMAIN</scope>
    <scope>SUBUNIT</scope>
</reference>
<reference key="5">
    <citation type="journal article" date="2010" name="J. Biol. Chem.">
        <title>Tailspike interactions with lipopolysaccharide effect DNA ejection from phage P22 particles in vitro.</title>
        <authorList>
            <person name="Andres D."/>
            <person name="Hanke C."/>
            <person name="Baxa U."/>
            <person name="Seul A."/>
            <person name="Barbirz S."/>
            <person name="Seckler R."/>
        </authorList>
    </citation>
    <scope>FUNCTION</scope>
</reference>
<reference key="6">
    <citation type="journal article" date="2019" name="Nat. Microbiol.">
        <title>Structural dynamics of bacteriophage P22 infection initiation revealed by cryo-electron tomography.</title>
        <authorList>
            <person name="Wang C."/>
            <person name="Tu J."/>
            <person name="Liu J."/>
            <person name="Molineux I.J."/>
        </authorList>
    </citation>
    <scope>FUNCTION</scope>
</reference>
<reference key="7">
    <citation type="journal article" date="2006" name="Structure">
        <title>Cryo-EM asymmetric reconstruction of bacteriophage P22 reveals organization of its DNA packaging and infecting machinery.</title>
        <authorList>
            <person name="Chang J."/>
            <person name="Weigele P."/>
            <person name="King J."/>
            <person name="Chiu W."/>
            <person name="Jiang W."/>
        </authorList>
    </citation>
    <scope>ELECTRON MICROSCOPY (20 ANGSTROMS) OF COMPLETE VIRION</scope>
    <scope>SUBUNIT</scope>
</reference>
<reference evidence="10" key="8">
    <citation type="journal article" date="2007" name="Nat. Struct. Mol. Biol.">
        <title>Structure of phage P22 cell envelope-penetrating needle.</title>
        <authorList>
            <person name="Olia A.S."/>
            <person name="Casjens S."/>
            <person name="Cingolani G."/>
        </authorList>
    </citation>
    <scope>X-RAY CRYSTALLOGRAPHY (2.10 ANGSTROMS)</scope>
    <scope>SUBUNIT</scope>
    <scope>FUNCTION</scope>
</reference>
<reference evidence="11 12 13" key="9">
    <citation type="journal article" date="2016" name="J. Biol. Chem.">
        <title>Structural Plasticity of the Protein Plug That Traps Newly Packaged Genomes in Podoviridae Virions.</title>
        <authorList>
            <person name="Bhardwaj A."/>
            <person name="Sankhala R.S."/>
            <person name="Olia A.S."/>
            <person name="Brooke D."/>
            <person name="Casjens S.R."/>
            <person name="Taylor D.J."/>
            <person name="Prevelige P.E. Jr."/>
            <person name="Cingolani G."/>
        </authorList>
    </citation>
    <scope>X-RAY CRYSTALLOGRAPHY (2.10 ANGSTROMS)</scope>
    <scope>SUBUNIT</scope>
</reference>
<reference evidence="14" key="10">
    <citation type="journal article" date="2023" name="J. Mol. Biol.">
        <title>Molecular Architecture of Salmonella Typhimurium Virus P22 Genome Ejection Machinery.</title>
        <authorList>
            <person name="Iglesias S.M."/>
            <person name="Lokareddy R.K."/>
            <person name="Yang R."/>
            <person name="Li F."/>
            <person name="Yeggoni D.P."/>
            <person name="David Hou C.F."/>
            <person name="Leroux M.N."/>
            <person name="Cortines J.R."/>
            <person name="Leavitt J.C."/>
            <person name="Bird M."/>
            <person name="Casjens S.R."/>
            <person name="White S."/>
            <person name="Teschke C.M."/>
            <person name="Cingolani G."/>
        </authorList>
    </citation>
    <scope>STRUCTURE BY ELECTRON MICROSCOPY (3.30 ANGSTROMS) OF 3-64</scope>
    <scope>INTERACTION WITH THE TAIL HUB PROTEIN GP10</scope>
    <scope>INTERACTION WITH HEAD-TO-TAIL ADAPTER PROTEIN GP4</scope>
    <scope>SUBCELLULAR LOCATION</scope>
</reference>
<comment type="function">
    <text evidence="2 4 6">Cell-perforating component and plug protein of the phage tail machine (PubMed:18059287, PubMed:20817910). Together with gp4 and gp10, gp26 is required for stabilization of the condensed DNA within the capsid by plugging the hole through which the DNA enters (PubMed:18059287). Host cell membrane perforation allows viral DNA ejection (PubMed:18059287). The needle penetrates the host outer membrane. The needle is released and the internal head protein gp7 is ejected to form an extra-cellular channel (PubMed:30886360).</text>
</comment>
<comment type="subunit">
    <text evidence="1 2 3 5 7">Homotrimer (PubMed:16730179, PubMed:18059287, PubMed:19482036, PubMed:26574546, PubMed:37952769). The trimer forms an elongated coiled-coil (240A x 25A) (PubMed:19482036, PubMed:26574546, PubMed:37952769). The N-terminal tip may exist in a pre-ejection extended conformation, which may fold into a trimer of hairpins only after ejection into the host (PubMed:26574546). Interacts (via N-terminus) with the tail hub gp10 (PubMed:37952769). Interacts with the head-to-tail adapter protein gp4 (PubMed:37952769).</text>
</comment>
<comment type="subcellular location">
    <subcellularLocation>
        <location evidence="7">Virion</location>
    </subcellularLocation>
</comment>
<comment type="domain">
    <text evidence="3">the N-terminus forms the domain that binds to the tail hub protein gp10 and plugs the portal vertex channel, the middle coiled-coil rod, and finally a C-terminus distal tip that is a tight trimer of alpha-helical hairpins.</text>
</comment>
<comment type="similarity">
    <text evidence="9">Belongs to the Lederbergvirus tail needle protein family.</text>
</comment>